<evidence type="ECO:0000250" key="1"/>
<evidence type="ECO:0000255" key="2">
    <source>
        <dbReference type="HAMAP-Rule" id="MF_00729"/>
    </source>
</evidence>
<reference key="1">
    <citation type="journal article" date="2005" name="J. Bacteriol.">
        <title>Insights on evolution of virulence and resistance from the complete genome analysis of an early methicillin-resistant Staphylococcus aureus strain and a biofilm-producing methicillin-resistant Staphylococcus epidermidis strain.</title>
        <authorList>
            <person name="Gill S.R."/>
            <person name="Fouts D.E."/>
            <person name="Archer G.L."/>
            <person name="Mongodin E.F."/>
            <person name="DeBoy R.T."/>
            <person name="Ravel J."/>
            <person name="Paulsen I.T."/>
            <person name="Kolonay J.F."/>
            <person name="Brinkac L.M."/>
            <person name="Beanan M.J."/>
            <person name="Dodson R.J."/>
            <person name="Daugherty S.C."/>
            <person name="Madupu R."/>
            <person name="Angiuoli S.V."/>
            <person name="Durkin A.S."/>
            <person name="Haft D.H."/>
            <person name="Vamathevan J.J."/>
            <person name="Khouri H."/>
            <person name="Utterback T.R."/>
            <person name="Lee C."/>
            <person name="Dimitrov G."/>
            <person name="Jiang L."/>
            <person name="Qin H."/>
            <person name="Weidman J."/>
            <person name="Tran K."/>
            <person name="Kang K.H."/>
            <person name="Hance I.R."/>
            <person name="Nelson K.E."/>
            <person name="Fraser C.M."/>
        </authorList>
    </citation>
    <scope>NUCLEOTIDE SEQUENCE [LARGE SCALE GENOMIC DNA]</scope>
    <source>
        <strain>COL</strain>
    </source>
</reference>
<gene>
    <name evidence="2" type="primary">fda</name>
    <name type="ordered locus">SACOL2622</name>
</gene>
<comment type="catalytic activity">
    <reaction evidence="2">
        <text>beta-D-fructose 1,6-bisphosphate = D-glyceraldehyde 3-phosphate + dihydroxyacetone phosphate</text>
        <dbReference type="Rhea" id="RHEA:14729"/>
        <dbReference type="ChEBI" id="CHEBI:32966"/>
        <dbReference type="ChEBI" id="CHEBI:57642"/>
        <dbReference type="ChEBI" id="CHEBI:59776"/>
        <dbReference type="EC" id="4.1.2.13"/>
    </reaction>
</comment>
<comment type="pathway">
    <text evidence="2">Carbohydrate degradation; glycolysis; D-glyceraldehyde 3-phosphate and glycerone phosphate from D-glucose: step 4/4.</text>
</comment>
<comment type="similarity">
    <text evidence="2">Belongs to the class I fructose-bisphosphate aldolase family.</text>
</comment>
<accession>Q5HCU6</accession>
<keyword id="KW-0324">Glycolysis</keyword>
<keyword id="KW-0456">Lyase</keyword>
<keyword id="KW-0704">Schiff base</keyword>
<organism>
    <name type="scientific">Staphylococcus aureus (strain COL)</name>
    <dbReference type="NCBI Taxonomy" id="93062"/>
    <lineage>
        <taxon>Bacteria</taxon>
        <taxon>Bacillati</taxon>
        <taxon>Bacillota</taxon>
        <taxon>Bacilli</taxon>
        <taxon>Bacillales</taxon>
        <taxon>Staphylococcaceae</taxon>
        <taxon>Staphylococcus</taxon>
    </lineage>
</organism>
<proteinExistence type="inferred from homology"/>
<sequence length="296" mass="33055">MNKEQLEKMKNGKGFIAALDQSGGSTPKALKEYGVNEDQYSNEDEMFQLVHDMRTRVVTSPSFSPDKILGAILFEQTMDREVESKYTADYLADKGVVPFLKVDKGLAEEQNGVQLMKPIDNLDNLLDRANERHIFGTKMRSNILELNEQGIKDVVEQQFEVAKQIIAKGLVPIIEPEVNINAKDKAEIEKVLKAELKKGLDSLNADQLVMLKLTIPTEPNLYKELAEHPNVVRVVVLSGGYSREKANELLKDNAELIASFSRALASDLRADQSKEEFDKALGDAVESIYDASVNKN</sequence>
<name>ALF1_STAAC</name>
<protein>
    <recommendedName>
        <fullName evidence="2">Fructose-bisphosphate aldolase class 1</fullName>
        <ecNumber evidence="2">4.1.2.13</ecNumber>
    </recommendedName>
    <alternativeName>
        <fullName>Fructose-bisphosphate aldolase class I</fullName>
        <shortName evidence="2">FBP aldolase</shortName>
    </alternativeName>
</protein>
<dbReference type="EC" id="4.1.2.13" evidence="2"/>
<dbReference type="EMBL" id="CP000046">
    <property type="protein sequence ID" value="AAW38621.1"/>
    <property type="molecule type" value="Genomic_DNA"/>
</dbReference>
<dbReference type="RefSeq" id="WP_001031413.1">
    <property type="nucleotide sequence ID" value="NZ_JBGOFO010000001.1"/>
</dbReference>
<dbReference type="SMR" id="Q5HCU6"/>
<dbReference type="KEGG" id="sac:SACOL2622"/>
<dbReference type="HOGENOM" id="CLU_081560_0_0_9"/>
<dbReference type="UniPathway" id="UPA00109">
    <property type="reaction ID" value="UER00183"/>
</dbReference>
<dbReference type="Proteomes" id="UP000000530">
    <property type="component" value="Chromosome"/>
</dbReference>
<dbReference type="GO" id="GO:0004332">
    <property type="term" value="F:fructose-bisphosphate aldolase activity"/>
    <property type="evidence" value="ECO:0007669"/>
    <property type="project" value="UniProtKB-UniRule"/>
</dbReference>
<dbReference type="GO" id="GO:0006096">
    <property type="term" value="P:glycolytic process"/>
    <property type="evidence" value="ECO:0007669"/>
    <property type="project" value="UniProtKB-UniRule"/>
</dbReference>
<dbReference type="Gene3D" id="3.20.20.70">
    <property type="entry name" value="Aldolase class I"/>
    <property type="match status" value="1"/>
</dbReference>
<dbReference type="HAMAP" id="MF_00729">
    <property type="entry name" value="FBP_aldolase_1"/>
    <property type="match status" value="1"/>
</dbReference>
<dbReference type="InterPro" id="IPR013785">
    <property type="entry name" value="Aldolase_TIM"/>
</dbReference>
<dbReference type="InterPro" id="IPR000741">
    <property type="entry name" value="FBA_I"/>
</dbReference>
<dbReference type="InterPro" id="IPR023014">
    <property type="entry name" value="FBA_I_Gram+-type"/>
</dbReference>
<dbReference type="NCBIfam" id="NF003784">
    <property type="entry name" value="PRK05377.1"/>
    <property type="match status" value="1"/>
</dbReference>
<dbReference type="PANTHER" id="PTHR11627">
    <property type="entry name" value="FRUCTOSE-BISPHOSPHATE ALDOLASE"/>
    <property type="match status" value="1"/>
</dbReference>
<dbReference type="Pfam" id="PF00274">
    <property type="entry name" value="Glycolytic"/>
    <property type="match status" value="1"/>
</dbReference>
<dbReference type="SUPFAM" id="SSF51569">
    <property type="entry name" value="Aldolase"/>
    <property type="match status" value="1"/>
</dbReference>
<feature type="initiator methionine" description="Removed" evidence="1">
    <location>
        <position position="1"/>
    </location>
</feature>
<feature type="chain" id="PRO_0000216903" description="Fructose-bisphosphate aldolase class 1">
    <location>
        <begin position="2"/>
        <end position="296"/>
    </location>
</feature>
<feature type="active site" description="Proton acceptor" evidence="2">
    <location>
        <position position="175"/>
    </location>
</feature>
<feature type="active site" description="Schiff-base intermediate with dihydroxyacetone-P" evidence="2">
    <location>
        <position position="212"/>
    </location>
</feature>